<comment type="function">
    <text evidence="1">One of the essential components for the initiation of protein synthesis. Stabilizes the binding of IF-2 and IF-3 on the 30S subunit to which N-formylmethionyl-tRNA(fMet) subsequently binds. Helps modulate mRNA selection, yielding the 30S pre-initiation complex (PIC). Upon addition of the 50S ribosomal subunit IF-1, IF-2 and IF-3 are released leaving the mature 70S translation initiation complex.</text>
</comment>
<comment type="subunit">
    <text evidence="1">Component of the 30S ribosomal translation pre-initiation complex which assembles on the 30S ribosome in the order IF-2 and IF-3, IF-1 and N-formylmethionyl-tRNA(fMet); mRNA recruitment can occur at any time during PIC assembly.</text>
</comment>
<comment type="subcellular location">
    <subcellularLocation>
        <location evidence="1">Cytoplasm</location>
    </subcellularLocation>
</comment>
<comment type="similarity">
    <text evidence="1">Belongs to the IF-1 family.</text>
</comment>
<gene>
    <name evidence="1" type="primary">infA</name>
    <name type="ordered locus">HNE_1354</name>
</gene>
<organism>
    <name type="scientific">Hyphomonas neptunium (strain ATCC 15444)</name>
    <dbReference type="NCBI Taxonomy" id="228405"/>
    <lineage>
        <taxon>Bacteria</taxon>
        <taxon>Pseudomonadati</taxon>
        <taxon>Pseudomonadota</taxon>
        <taxon>Alphaproteobacteria</taxon>
        <taxon>Hyphomonadales</taxon>
        <taxon>Hyphomonadaceae</taxon>
        <taxon>Hyphomonas</taxon>
    </lineage>
</organism>
<reference key="1">
    <citation type="journal article" date="2006" name="J. Bacteriol.">
        <title>Comparative genomic evidence for a close relationship between the dimorphic prosthecate bacteria Hyphomonas neptunium and Caulobacter crescentus.</title>
        <authorList>
            <person name="Badger J.H."/>
            <person name="Hoover T.R."/>
            <person name="Brun Y.V."/>
            <person name="Weiner R.M."/>
            <person name="Laub M.T."/>
            <person name="Alexandre G."/>
            <person name="Mrazek J."/>
            <person name="Ren Q."/>
            <person name="Paulsen I.T."/>
            <person name="Nelson K.E."/>
            <person name="Khouri H.M."/>
            <person name="Radune D."/>
            <person name="Sosa J."/>
            <person name="Dodson R.J."/>
            <person name="Sullivan S.A."/>
            <person name="Rosovitz M.J."/>
            <person name="Madupu R."/>
            <person name="Brinkac L.M."/>
            <person name="Durkin A.S."/>
            <person name="Daugherty S.C."/>
            <person name="Kothari S.P."/>
            <person name="Giglio M.G."/>
            <person name="Zhou L."/>
            <person name="Haft D.H."/>
            <person name="Selengut J.D."/>
            <person name="Davidsen T.M."/>
            <person name="Yang Q."/>
            <person name="Zafar N."/>
            <person name="Ward N.L."/>
        </authorList>
    </citation>
    <scope>NUCLEOTIDE SEQUENCE [LARGE SCALE GENOMIC DNA]</scope>
    <source>
        <strain>ATCC 15444</strain>
    </source>
</reference>
<sequence>MSKEELIEFEGTVVELLPNATFRVKLENDHEIIAHTAGKMRKNRIRVLTGDKVMVEMTPYDLTKGRITYRFK</sequence>
<feature type="chain" id="PRO_0000263811" description="Translation initiation factor IF-1">
    <location>
        <begin position="1"/>
        <end position="72"/>
    </location>
</feature>
<feature type="domain" description="S1-like" evidence="1">
    <location>
        <begin position="1"/>
        <end position="72"/>
    </location>
</feature>
<proteinExistence type="inferred from homology"/>
<accession>Q0C2H2</accession>
<dbReference type="EMBL" id="CP000158">
    <property type="protein sequence ID" value="ABI78545.1"/>
    <property type="molecule type" value="Genomic_DNA"/>
</dbReference>
<dbReference type="RefSeq" id="WP_011646371.1">
    <property type="nucleotide sequence ID" value="NC_008358.1"/>
</dbReference>
<dbReference type="SMR" id="Q0C2H2"/>
<dbReference type="STRING" id="228405.HNE_1354"/>
<dbReference type="GeneID" id="92500435"/>
<dbReference type="KEGG" id="hne:HNE_1354"/>
<dbReference type="eggNOG" id="COG0361">
    <property type="taxonomic scope" value="Bacteria"/>
</dbReference>
<dbReference type="HOGENOM" id="CLU_151267_1_0_5"/>
<dbReference type="Proteomes" id="UP000001959">
    <property type="component" value="Chromosome"/>
</dbReference>
<dbReference type="GO" id="GO:0005829">
    <property type="term" value="C:cytosol"/>
    <property type="evidence" value="ECO:0007669"/>
    <property type="project" value="TreeGrafter"/>
</dbReference>
<dbReference type="GO" id="GO:0043022">
    <property type="term" value="F:ribosome binding"/>
    <property type="evidence" value="ECO:0007669"/>
    <property type="project" value="UniProtKB-UniRule"/>
</dbReference>
<dbReference type="GO" id="GO:0019843">
    <property type="term" value="F:rRNA binding"/>
    <property type="evidence" value="ECO:0007669"/>
    <property type="project" value="UniProtKB-UniRule"/>
</dbReference>
<dbReference type="GO" id="GO:0003743">
    <property type="term" value="F:translation initiation factor activity"/>
    <property type="evidence" value="ECO:0007669"/>
    <property type="project" value="UniProtKB-UniRule"/>
</dbReference>
<dbReference type="CDD" id="cd04451">
    <property type="entry name" value="S1_IF1"/>
    <property type="match status" value="1"/>
</dbReference>
<dbReference type="FunFam" id="2.40.50.140:FF:000002">
    <property type="entry name" value="Translation initiation factor IF-1"/>
    <property type="match status" value="1"/>
</dbReference>
<dbReference type="Gene3D" id="2.40.50.140">
    <property type="entry name" value="Nucleic acid-binding proteins"/>
    <property type="match status" value="1"/>
</dbReference>
<dbReference type="HAMAP" id="MF_00075">
    <property type="entry name" value="IF_1"/>
    <property type="match status" value="1"/>
</dbReference>
<dbReference type="InterPro" id="IPR012340">
    <property type="entry name" value="NA-bd_OB-fold"/>
</dbReference>
<dbReference type="InterPro" id="IPR006196">
    <property type="entry name" value="RNA-binding_domain_S1_IF1"/>
</dbReference>
<dbReference type="InterPro" id="IPR003029">
    <property type="entry name" value="S1_domain"/>
</dbReference>
<dbReference type="InterPro" id="IPR004368">
    <property type="entry name" value="TIF_IF1"/>
</dbReference>
<dbReference type="NCBIfam" id="TIGR00008">
    <property type="entry name" value="infA"/>
    <property type="match status" value="1"/>
</dbReference>
<dbReference type="PANTHER" id="PTHR33370">
    <property type="entry name" value="TRANSLATION INITIATION FACTOR IF-1, CHLOROPLASTIC"/>
    <property type="match status" value="1"/>
</dbReference>
<dbReference type="PANTHER" id="PTHR33370:SF1">
    <property type="entry name" value="TRANSLATION INITIATION FACTOR IF-1, CHLOROPLASTIC"/>
    <property type="match status" value="1"/>
</dbReference>
<dbReference type="Pfam" id="PF01176">
    <property type="entry name" value="eIF-1a"/>
    <property type="match status" value="1"/>
</dbReference>
<dbReference type="SMART" id="SM00316">
    <property type="entry name" value="S1"/>
    <property type="match status" value="1"/>
</dbReference>
<dbReference type="SUPFAM" id="SSF50249">
    <property type="entry name" value="Nucleic acid-binding proteins"/>
    <property type="match status" value="1"/>
</dbReference>
<dbReference type="PROSITE" id="PS50832">
    <property type="entry name" value="S1_IF1_TYPE"/>
    <property type="match status" value="1"/>
</dbReference>
<name>IF1_HYPNA</name>
<protein>
    <recommendedName>
        <fullName evidence="1">Translation initiation factor IF-1</fullName>
    </recommendedName>
</protein>
<keyword id="KW-0963">Cytoplasm</keyword>
<keyword id="KW-0396">Initiation factor</keyword>
<keyword id="KW-0648">Protein biosynthesis</keyword>
<keyword id="KW-1185">Reference proteome</keyword>
<keyword id="KW-0694">RNA-binding</keyword>
<keyword id="KW-0699">rRNA-binding</keyword>
<evidence type="ECO:0000255" key="1">
    <source>
        <dbReference type="HAMAP-Rule" id="MF_00075"/>
    </source>
</evidence>